<dbReference type="EMBL" id="AF290195">
    <property type="protein sequence ID" value="AAG09915.1"/>
    <property type="molecule type" value="mRNA"/>
</dbReference>
<dbReference type="EMBL" id="AF113540">
    <property type="protein sequence ID" value="AAF14877.1"/>
    <property type="status" value="ALT_FRAME"/>
    <property type="molecule type" value="mRNA"/>
</dbReference>
<dbReference type="EMBL" id="AK001477">
    <property type="protein sequence ID" value="BAA91714.1"/>
    <property type="molecule type" value="mRNA"/>
</dbReference>
<dbReference type="EMBL" id="AK023070">
    <property type="protein sequence ID" value="BAB14389.1"/>
    <property type="molecule type" value="mRNA"/>
</dbReference>
<dbReference type="EMBL" id="CH471162">
    <property type="protein sequence ID" value="EAW82033.1"/>
    <property type="molecule type" value="Genomic_DNA"/>
</dbReference>
<dbReference type="EMBL" id="CH471162">
    <property type="protein sequence ID" value="EAW82034.1"/>
    <property type="molecule type" value="Genomic_DNA"/>
</dbReference>
<dbReference type="EMBL" id="CH471162">
    <property type="protein sequence ID" value="EAW82035.1"/>
    <property type="molecule type" value="Genomic_DNA"/>
</dbReference>
<dbReference type="EMBL" id="CH471162">
    <property type="protein sequence ID" value="EAW82036.1"/>
    <property type="molecule type" value="Genomic_DNA"/>
</dbReference>
<dbReference type="EMBL" id="CH471162">
    <property type="protein sequence ID" value="EAW82037.1"/>
    <property type="molecule type" value="Genomic_DNA"/>
</dbReference>
<dbReference type="EMBL" id="BC002672">
    <property type="protein sequence ID" value="AAH02672.1"/>
    <property type="molecule type" value="mRNA"/>
</dbReference>
<dbReference type="EMBL" id="BC003055">
    <property type="protein sequence ID" value="AAH03055.1"/>
    <property type="molecule type" value="mRNA"/>
</dbReference>
<dbReference type="EMBL" id="BC065729">
    <property type="protein sequence ID" value="AAH65729.1"/>
    <property type="molecule type" value="mRNA"/>
</dbReference>
<dbReference type="CCDS" id="CCDS6436.1"/>
<dbReference type="RefSeq" id="NP_001074472.1">
    <property type="nucleotide sequence ID" value="NM_001081003.3"/>
</dbReference>
<dbReference type="RefSeq" id="NP_001074473.1">
    <property type="nucleotide sequence ID" value="NM_001081004.3"/>
</dbReference>
<dbReference type="RefSeq" id="NP_001274166.1">
    <property type="nucleotide sequence ID" value="NM_001287237.2"/>
</dbReference>
<dbReference type="RefSeq" id="NP_054785.2">
    <property type="nucleotide sequence ID" value="NM_014066.3"/>
</dbReference>
<dbReference type="PDB" id="8ESD">
    <property type="method" value="X-ray"/>
    <property type="resolution" value="3.33 A"/>
    <property type="chains" value="F=149-222"/>
</dbReference>
<dbReference type="PDB" id="8F2R">
    <property type="method" value="EM"/>
    <property type="resolution" value="3.12 A"/>
    <property type="chains" value="E=20-224"/>
</dbReference>
<dbReference type="PDB" id="8F2U">
    <property type="method" value="EM"/>
    <property type="resolution" value="3.53 A"/>
    <property type="chains" value="E=1-224"/>
</dbReference>
<dbReference type="PDB" id="8P0W">
    <property type="method" value="EM"/>
    <property type="resolution" value="2.90 A"/>
    <property type="chains" value="E=1-224"/>
</dbReference>
<dbReference type="PDBsum" id="8ESD"/>
<dbReference type="PDBsum" id="8F2R"/>
<dbReference type="PDBsum" id="8F2U"/>
<dbReference type="PDBsum" id="8P0W"/>
<dbReference type="EMDB" id="EMD-17340"/>
<dbReference type="EMDB" id="EMD-17342"/>
<dbReference type="EMDB" id="EMD-28825"/>
<dbReference type="EMDB" id="EMD-28827"/>
<dbReference type="SMR" id="Q9GZQ3"/>
<dbReference type="BioGRID" id="118812">
    <property type="interactions" value="72"/>
</dbReference>
<dbReference type="ComplexPortal" id="CPX-2211">
    <property type="entry name" value="Commander complex"/>
</dbReference>
<dbReference type="CORUM" id="Q9GZQ3"/>
<dbReference type="FunCoup" id="Q9GZQ3">
    <property type="interactions" value="2137"/>
</dbReference>
<dbReference type="IntAct" id="Q9GZQ3">
    <property type="interactions" value="54"/>
</dbReference>
<dbReference type="STRING" id="9606.ENSP00000394331"/>
<dbReference type="iPTMnet" id="Q9GZQ3"/>
<dbReference type="PhosphoSitePlus" id="Q9GZQ3"/>
<dbReference type="BioMuta" id="COMMD5"/>
<dbReference type="DMDM" id="51316093"/>
<dbReference type="jPOST" id="Q9GZQ3"/>
<dbReference type="MassIVE" id="Q9GZQ3"/>
<dbReference type="PaxDb" id="9606-ENSP00000394331"/>
<dbReference type="PeptideAtlas" id="Q9GZQ3"/>
<dbReference type="ProteomicsDB" id="80111"/>
<dbReference type="Pumba" id="Q9GZQ3"/>
<dbReference type="Antibodypedia" id="28668">
    <property type="antibodies" value="48 antibodies from 18 providers"/>
</dbReference>
<dbReference type="DNASU" id="28991"/>
<dbReference type="Ensembl" id="ENST00000305103.4">
    <property type="protein sequence ID" value="ENSP00000304544.3"/>
    <property type="gene ID" value="ENSG00000170619.10"/>
</dbReference>
<dbReference type="Ensembl" id="ENST00000402718.4">
    <property type="protein sequence ID" value="ENSP00000385793.3"/>
    <property type="gene ID" value="ENSG00000170619.10"/>
</dbReference>
<dbReference type="Ensembl" id="ENST00000450361.2">
    <property type="protein sequence ID" value="ENSP00000394331.2"/>
    <property type="gene ID" value="ENSG00000170619.10"/>
</dbReference>
<dbReference type="Ensembl" id="ENST00000543949.2">
    <property type="protein sequence ID" value="ENSP00000445840.2"/>
    <property type="gene ID" value="ENSG00000170619.10"/>
</dbReference>
<dbReference type="GeneID" id="28991"/>
<dbReference type="KEGG" id="hsa:28991"/>
<dbReference type="MANE-Select" id="ENST00000305103.4">
    <property type="protein sequence ID" value="ENSP00000304544.3"/>
    <property type="RefSeq nucleotide sequence ID" value="NM_014066.4"/>
    <property type="RefSeq protein sequence ID" value="NP_054785.2"/>
</dbReference>
<dbReference type="UCSC" id="uc003zem.4">
    <property type="organism name" value="human"/>
</dbReference>
<dbReference type="AGR" id="HGNC:17902"/>
<dbReference type="CTD" id="28991"/>
<dbReference type="DisGeNET" id="28991"/>
<dbReference type="GeneCards" id="COMMD5"/>
<dbReference type="HGNC" id="HGNC:17902">
    <property type="gene designation" value="COMMD5"/>
</dbReference>
<dbReference type="HPA" id="ENSG00000170619">
    <property type="expression patterns" value="Low tissue specificity"/>
</dbReference>
<dbReference type="MIM" id="608216">
    <property type="type" value="gene"/>
</dbReference>
<dbReference type="neXtProt" id="NX_Q9GZQ3"/>
<dbReference type="OpenTargets" id="ENSG00000170619"/>
<dbReference type="PharmGKB" id="PA134873412"/>
<dbReference type="VEuPathDB" id="HostDB:ENSG00000170619"/>
<dbReference type="eggNOG" id="ENOG502RCJ6">
    <property type="taxonomic scope" value="Eukaryota"/>
</dbReference>
<dbReference type="GeneTree" id="ENSGT00390000013770"/>
<dbReference type="InParanoid" id="Q9GZQ3"/>
<dbReference type="OMA" id="IQRTKFN"/>
<dbReference type="OrthoDB" id="203754at2759"/>
<dbReference type="PAN-GO" id="Q9GZQ3">
    <property type="GO annotations" value="1 GO annotation based on evolutionary models"/>
</dbReference>
<dbReference type="PhylomeDB" id="Q9GZQ3"/>
<dbReference type="TreeFam" id="TF323880"/>
<dbReference type="PathwayCommons" id="Q9GZQ3"/>
<dbReference type="Reactome" id="R-HSA-8951664">
    <property type="pathway name" value="Neddylation"/>
</dbReference>
<dbReference type="SignaLink" id="Q9GZQ3"/>
<dbReference type="SIGNOR" id="Q9GZQ3"/>
<dbReference type="BioGRID-ORCS" id="28991">
    <property type="hits" value="29 hits in 1113 CRISPR screens"/>
</dbReference>
<dbReference type="ChiTaRS" id="COMMD5">
    <property type="organism name" value="human"/>
</dbReference>
<dbReference type="GenomeRNAi" id="28991"/>
<dbReference type="Pharos" id="Q9GZQ3">
    <property type="development level" value="Tbio"/>
</dbReference>
<dbReference type="PRO" id="PR:Q9GZQ3"/>
<dbReference type="Proteomes" id="UP000005640">
    <property type="component" value="Chromosome 8"/>
</dbReference>
<dbReference type="RNAct" id="Q9GZQ3">
    <property type="molecule type" value="protein"/>
</dbReference>
<dbReference type="Bgee" id="ENSG00000170619">
    <property type="expression patterns" value="Expressed in granulocyte and 155 other cell types or tissues"/>
</dbReference>
<dbReference type="ExpressionAtlas" id="Q9GZQ3">
    <property type="expression patterns" value="baseline and differential"/>
</dbReference>
<dbReference type="GO" id="GO:0005829">
    <property type="term" value="C:cytosol"/>
    <property type="evidence" value="ECO:0000314"/>
    <property type="project" value="HPA"/>
</dbReference>
<dbReference type="GO" id="GO:0005654">
    <property type="term" value="C:nucleoplasm"/>
    <property type="evidence" value="ECO:0000314"/>
    <property type="project" value="HPA"/>
</dbReference>
<dbReference type="GO" id="GO:0005634">
    <property type="term" value="C:nucleus"/>
    <property type="evidence" value="ECO:0000318"/>
    <property type="project" value="GO_Central"/>
</dbReference>
<dbReference type="CDD" id="cd04753">
    <property type="entry name" value="Commd5_HCaRG"/>
    <property type="match status" value="1"/>
</dbReference>
<dbReference type="InterPro" id="IPR017920">
    <property type="entry name" value="COMM"/>
</dbReference>
<dbReference type="InterPro" id="IPR037357">
    <property type="entry name" value="COMMD5"/>
</dbReference>
<dbReference type="PANTHER" id="PTHR15666">
    <property type="entry name" value="COMM DOMAIN CONTAINING PROTEIN 5"/>
    <property type="match status" value="1"/>
</dbReference>
<dbReference type="PANTHER" id="PTHR15666:SF3">
    <property type="entry name" value="COMM DOMAIN-CONTAINING PROTEIN 5"/>
    <property type="match status" value="1"/>
</dbReference>
<dbReference type="Pfam" id="PF07258">
    <property type="entry name" value="COMM_domain"/>
    <property type="match status" value="1"/>
</dbReference>
<dbReference type="Pfam" id="PF21672">
    <property type="entry name" value="COMM_HN"/>
    <property type="match status" value="1"/>
</dbReference>
<dbReference type="PROSITE" id="PS51269">
    <property type="entry name" value="COMM"/>
    <property type="match status" value="1"/>
</dbReference>
<sequence length="224" mass="24670">MSAVGAATPYLHHPGDSHSGRVSFLGAQLPPEVAAMARLLGDLDRSTFRKLLKFVVSSLQGEDCREAVQRLGVSANLPEEQLGALLAGMHTLLQQALRLPPTSLKPDTFRDQLQELCIPQDLVGDLASVVFGSQRPLLDSVAQQQGAWLPHVADFRWRVDVAISTSALARSLQPSVLMQLKLSDGSAYRFEVPTAKFQELRYSVALVLKEMADLEKRCERRLQD</sequence>
<feature type="initiator methionine" description="Removed" evidence="18">
    <location>
        <position position="1"/>
    </location>
</feature>
<feature type="chain" id="PRO_0000077395" description="COMM domain-containing protein 5">
    <location>
        <begin position="2"/>
        <end position="224"/>
    </location>
</feature>
<feature type="domain" description="COMM" evidence="2">
    <location>
        <begin position="151"/>
        <end position="215"/>
    </location>
</feature>
<feature type="modified residue" description="N-acetylserine" evidence="18">
    <location>
        <position position="2"/>
    </location>
</feature>
<feature type="sequence variant" id="VAR_020130" description="In dbSNP:rs1209879." evidence="4">
    <original>A</original>
    <variation>T</variation>
    <location>
        <position position="6"/>
    </location>
</feature>
<feature type="sequence variant" id="VAR_048812" description="In dbSNP:rs421427.">
    <original>Q</original>
    <variation>H</variation>
    <location>
        <position position="69"/>
    </location>
</feature>
<feature type="sequence conflict" description="In Ref. 3; BAA91714." evidence="12" ref="3">
    <original>T</original>
    <variation>I</variation>
    <location>
        <position position="108"/>
    </location>
</feature>
<feature type="helix" evidence="19">
    <location>
        <begin position="31"/>
        <end position="39"/>
    </location>
</feature>
<feature type="helix" evidence="19">
    <location>
        <begin position="40"/>
        <end position="42"/>
    </location>
</feature>
<feature type="helix" evidence="19">
    <location>
        <begin position="45"/>
        <end position="59"/>
    </location>
</feature>
<feature type="helix" evidence="19">
    <location>
        <begin position="65"/>
        <end position="75"/>
    </location>
</feature>
<feature type="helix" evidence="19">
    <location>
        <begin position="79"/>
        <end position="97"/>
    </location>
</feature>
<feature type="turn" evidence="19">
    <location>
        <begin position="101"/>
        <end position="103"/>
    </location>
</feature>
<feature type="helix" evidence="19">
    <location>
        <begin position="106"/>
        <end position="115"/>
    </location>
</feature>
<feature type="helix" evidence="19">
    <location>
        <begin position="120"/>
        <end position="131"/>
    </location>
</feature>
<feature type="helix" evidence="19">
    <location>
        <begin position="135"/>
        <end position="143"/>
    </location>
</feature>
<feature type="helix" evidence="19">
    <location>
        <begin position="144"/>
        <end position="146"/>
    </location>
</feature>
<feature type="strand" evidence="19">
    <location>
        <begin position="152"/>
        <end position="165"/>
    </location>
</feature>
<feature type="strand" evidence="19">
    <location>
        <begin position="173"/>
        <end position="182"/>
    </location>
</feature>
<feature type="strand" evidence="19">
    <location>
        <begin position="187"/>
        <end position="192"/>
    </location>
</feature>
<feature type="helix" evidence="19">
    <location>
        <begin position="194"/>
        <end position="221"/>
    </location>
</feature>
<organism>
    <name type="scientific">Homo sapiens</name>
    <name type="common">Human</name>
    <dbReference type="NCBI Taxonomy" id="9606"/>
    <lineage>
        <taxon>Eukaryota</taxon>
        <taxon>Metazoa</taxon>
        <taxon>Chordata</taxon>
        <taxon>Craniata</taxon>
        <taxon>Vertebrata</taxon>
        <taxon>Euteleostomi</taxon>
        <taxon>Mammalia</taxon>
        <taxon>Eutheria</taxon>
        <taxon>Euarchontoglires</taxon>
        <taxon>Primates</taxon>
        <taxon>Haplorrhini</taxon>
        <taxon>Catarrhini</taxon>
        <taxon>Hominidae</taxon>
        <taxon>Homo</taxon>
    </lineage>
</organism>
<protein>
    <recommendedName>
        <fullName>COMM domain-containing protein 5</fullName>
    </recommendedName>
    <alternativeName>
        <fullName>Hypertension-related calcium-regulated gene protein</fullName>
        <shortName>HCaRG</shortName>
    </alternativeName>
</protein>
<comment type="function">
    <text evidence="1 5 10 11 13">Scaffold protein in the commander complex that is essential for endosomal recycling of transmembrane cargos; the commander complex is composed of the CCC subcomplex and the retriever subcomplex (PubMed:37172566, PubMed:38459129). May modulate activity of cullin-RING E3 ubiquitin ligase (CRL) complexes (PubMed:21778237). Negatively regulates cell proliferation (By similarity). Negatively regulates cell cycle G2/M phase transition probably by transactivating p21/CDKN1A through the p53/TP53-independent signaling pathway (By similarity). Involved in kidney proximal tubule morphogenesis (By similarity). Down-regulates activation of NF-kappa-B (PubMed:15799966).</text>
</comment>
<comment type="subunit">
    <text evidence="5 6 7 8 9 10 11">Component of the commander complex consisting of the CCC subcomplex and the retriever subcomplex (PubMed:37172566, PubMed:38459129, PubMed:25355947, PubMed:15799966). Component of the CCC (COMMD/CCDC22/CCDC93) subcomplex consisting of COMMD1, COMMD2, COMMD3, COMMD4, COMMD5, COMMD6, COMMD7, COMMD8, COMMD9, COMMD10, CCDC22 and CCDC93; within the complex forms a heterodimer with COMMD10 (PubMed:37172566, PubMed:38459129, PubMed:15799966, PubMed:23563313, PubMed:25355947). Interacts (via COMM domain) with COMMD1 (via COMM domain). Interacts with RELA, RELB, NFKB1/p105 (PubMed:15799966). Interacts with CCDC22, CCDC93, SCNN1B, CUL2, CUL3, CUL4A, CUL4B, CUL7 (PubMed:21778237, PubMed:23637203, PubMed:23563313, PubMed:25355947).</text>
</comment>
<comment type="interaction">
    <interactant intactId="EBI-1550256">
        <id>Q9GZQ3</id>
    </interactant>
    <interactant intactId="EBI-3943153">
        <id>O60826</id>
        <label>CCDC22</label>
    </interactant>
    <organismsDiffer>false</organismsDiffer>
    <experiments>13</experiments>
</comment>
<comment type="interaction">
    <interactant intactId="EBI-1550256">
        <id>Q9GZQ3</id>
    </interactant>
    <interactant intactId="EBI-1104769">
        <id>Q567U6</id>
        <label>CCDC93</label>
    </interactant>
    <organismsDiffer>false</organismsDiffer>
    <experiments>6</experiments>
</comment>
<comment type="interaction">
    <interactant intactId="EBI-1550256">
        <id>Q9GZQ3</id>
    </interactant>
    <interactant intactId="EBI-1550112">
        <id>Q8N668</id>
        <label>COMMD1</label>
    </interactant>
    <organismsDiffer>false</organismsDiffer>
    <experiments>7</experiments>
</comment>
<comment type="interaction">
    <interactant intactId="EBI-1550256">
        <id>Q9GZQ3</id>
    </interactant>
    <interactant intactId="EBI-1550310">
        <id>Q9Y6G5</id>
        <label>COMMD10</label>
    </interactant>
    <organismsDiffer>false</organismsDiffer>
    <experiments>13</experiments>
</comment>
<comment type="subcellular location">
    <subcellularLocation>
        <location evidence="6">Cytoplasm</location>
    </subcellularLocation>
    <subcellularLocation>
        <location evidence="6">Nucleus</location>
    </subcellularLocation>
</comment>
<comment type="tissue specificity">
    <text evidence="3 5">Highly expressed in heart, stomach, jejunum, kidney, liver, and adrenal gland. Expression was generally higher in adult organs than in fetal tissues, particularly in heart, kidney, and liver.</text>
</comment>
<comment type="similarity">
    <text evidence="12">Belongs to the COMM domain-containing protein 5 family.</text>
</comment>
<comment type="sequence caution" evidence="12">
    <conflict type="frameshift">
        <sequence resource="EMBL-CDS" id="AAF14877"/>
    </conflict>
</comment>
<keyword id="KW-0002">3D-structure</keyword>
<keyword id="KW-0007">Acetylation</keyword>
<keyword id="KW-0963">Cytoplasm</keyword>
<keyword id="KW-0539">Nucleus</keyword>
<keyword id="KW-1267">Proteomics identification</keyword>
<keyword id="KW-1185">Reference proteome</keyword>
<keyword id="KW-0804">Transcription</keyword>
<keyword id="KW-0805">Transcription regulation</keyword>
<keyword id="KW-0833">Ubl conjugation pathway</keyword>
<proteinExistence type="evidence at protein level"/>
<name>COMD5_HUMAN</name>
<evidence type="ECO:0000250" key="1">
    <source>
        <dbReference type="UniProtKB" id="Q9ERR2"/>
    </source>
</evidence>
<evidence type="ECO:0000255" key="2">
    <source>
        <dbReference type="PROSITE-ProRule" id="PRU00602"/>
    </source>
</evidence>
<evidence type="ECO:0000269" key="3">
    <source>
    </source>
</evidence>
<evidence type="ECO:0000269" key="4">
    <source>
    </source>
</evidence>
<evidence type="ECO:0000269" key="5">
    <source>
    </source>
</evidence>
<evidence type="ECO:0000269" key="6">
    <source>
    </source>
</evidence>
<evidence type="ECO:0000269" key="7">
    <source>
    </source>
</evidence>
<evidence type="ECO:0000269" key="8">
    <source>
    </source>
</evidence>
<evidence type="ECO:0000269" key="9">
    <source>
    </source>
</evidence>
<evidence type="ECO:0000269" key="10">
    <source>
    </source>
</evidence>
<evidence type="ECO:0000269" key="11">
    <source>
    </source>
</evidence>
<evidence type="ECO:0000305" key="12"/>
<evidence type="ECO:0000305" key="13">
    <source>
    </source>
</evidence>
<evidence type="ECO:0007744" key="14">
    <source>
        <dbReference type="PDB" id="8ESD"/>
    </source>
</evidence>
<evidence type="ECO:0007744" key="15">
    <source>
        <dbReference type="PDB" id="8F2R"/>
    </source>
</evidence>
<evidence type="ECO:0007744" key="16">
    <source>
        <dbReference type="PDB" id="8F2U"/>
    </source>
</evidence>
<evidence type="ECO:0007744" key="17">
    <source>
        <dbReference type="PDB" id="8P0W"/>
    </source>
</evidence>
<evidence type="ECO:0007744" key="18">
    <source>
    </source>
</evidence>
<evidence type="ECO:0007829" key="19">
    <source>
        <dbReference type="PDB" id="8P0W"/>
    </source>
</evidence>
<accession>Q9GZQ3</accession>
<accession>D3DWN7</accession>
<accession>Q9NVN6</accession>
<accession>Q9UHX5</accession>
<gene>
    <name type="primary">COMMD5</name>
    <name type="ORF">HT002</name>
</gene>
<reference key="1">
    <citation type="journal article" date="2000" name="J. Biol. Chem.">
        <title>HCaRG, a novel calcium-regulated gene coding for a nuclear protein, is potentially involved in the regulation of cell proliferation.</title>
        <authorList>
            <person name="Solban N."/>
            <person name="Jia H.-P."/>
            <person name="Richard S."/>
            <person name="Tremblay S."/>
            <person name="Devlin A.M."/>
            <person name="Peng J."/>
            <person name="Gossard F."/>
            <person name="Guo D.-F."/>
            <person name="Morel G."/>
            <person name="Hamet P."/>
            <person name="Lewanczuk R."/>
            <person name="Tremblay J."/>
        </authorList>
    </citation>
    <scope>NUCLEOTIDE SEQUENCE [MRNA]</scope>
    <scope>TISSUE SPECIFICITY</scope>
    <source>
        <tissue>Parathyroid</tissue>
    </source>
</reference>
<reference key="2">
    <citation type="journal article" date="2000" name="Proc. Natl. Acad. Sci. U.S.A.">
        <title>Gene expression profiling in the human hypothalamus-pituitary-adrenal axis and full-length cDNA cloning.</title>
        <authorList>
            <person name="Hu R.-M."/>
            <person name="Han Z.-G."/>
            <person name="Song H.-D."/>
            <person name="Peng Y.-D."/>
            <person name="Huang Q.-H."/>
            <person name="Ren S.-X."/>
            <person name="Gu Y.-J."/>
            <person name="Huang C.-H."/>
            <person name="Li Y.-B."/>
            <person name="Jiang C.-L."/>
            <person name="Fu G."/>
            <person name="Zhang Q.-H."/>
            <person name="Gu B.-W."/>
            <person name="Dai M."/>
            <person name="Mao Y.-F."/>
            <person name="Gao G.-F."/>
            <person name="Rong R."/>
            <person name="Ye M."/>
            <person name="Zhou J."/>
            <person name="Xu S.-H."/>
            <person name="Gu J."/>
            <person name="Shi J.-X."/>
            <person name="Jin W.-R."/>
            <person name="Zhang C.-K."/>
            <person name="Wu T.-M."/>
            <person name="Huang G.-Y."/>
            <person name="Chen Z."/>
            <person name="Chen M.-D."/>
            <person name="Chen J.-L."/>
        </authorList>
    </citation>
    <scope>NUCLEOTIDE SEQUENCE [LARGE SCALE MRNA]</scope>
    <scope>VARIANT THR-6</scope>
    <source>
        <tissue>Hypothalamus</tissue>
    </source>
</reference>
<reference key="3">
    <citation type="journal article" date="2004" name="Nat. Genet.">
        <title>Complete sequencing and characterization of 21,243 full-length human cDNAs.</title>
        <authorList>
            <person name="Ota T."/>
            <person name="Suzuki Y."/>
            <person name="Nishikawa T."/>
            <person name="Otsuki T."/>
            <person name="Sugiyama T."/>
            <person name="Irie R."/>
            <person name="Wakamatsu A."/>
            <person name="Hayashi K."/>
            <person name="Sato H."/>
            <person name="Nagai K."/>
            <person name="Kimura K."/>
            <person name="Makita H."/>
            <person name="Sekine M."/>
            <person name="Obayashi M."/>
            <person name="Nishi T."/>
            <person name="Shibahara T."/>
            <person name="Tanaka T."/>
            <person name="Ishii S."/>
            <person name="Yamamoto J."/>
            <person name="Saito K."/>
            <person name="Kawai Y."/>
            <person name="Isono Y."/>
            <person name="Nakamura Y."/>
            <person name="Nagahari K."/>
            <person name="Murakami K."/>
            <person name="Yasuda T."/>
            <person name="Iwayanagi T."/>
            <person name="Wagatsuma M."/>
            <person name="Shiratori A."/>
            <person name="Sudo H."/>
            <person name="Hosoiri T."/>
            <person name="Kaku Y."/>
            <person name="Kodaira H."/>
            <person name="Kondo H."/>
            <person name="Sugawara M."/>
            <person name="Takahashi M."/>
            <person name="Kanda K."/>
            <person name="Yokoi T."/>
            <person name="Furuya T."/>
            <person name="Kikkawa E."/>
            <person name="Omura Y."/>
            <person name="Abe K."/>
            <person name="Kamihara K."/>
            <person name="Katsuta N."/>
            <person name="Sato K."/>
            <person name="Tanikawa M."/>
            <person name="Yamazaki M."/>
            <person name="Ninomiya K."/>
            <person name="Ishibashi T."/>
            <person name="Yamashita H."/>
            <person name="Murakawa K."/>
            <person name="Fujimori K."/>
            <person name="Tanai H."/>
            <person name="Kimata M."/>
            <person name="Watanabe M."/>
            <person name="Hiraoka S."/>
            <person name="Chiba Y."/>
            <person name="Ishida S."/>
            <person name="Ono Y."/>
            <person name="Takiguchi S."/>
            <person name="Watanabe S."/>
            <person name="Yosida M."/>
            <person name="Hotuta T."/>
            <person name="Kusano J."/>
            <person name="Kanehori K."/>
            <person name="Takahashi-Fujii A."/>
            <person name="Hara H."/>
            <person name="Tanase T.-O."/>
            <person name="Nomura Y."/>
            <person name="Togiya S."/>
            <person name="Komai F."/>
            <person name="Hara R."/>
            <person name="Takeuchi K."/>
            <person name="Arita M."/>
            <person name="Imose N."/>
            <person name="Musashino K."/>
            <person name="Yuuki H."/>
            <person name="Oshima A."/>
            <person name="Sasaki N."/>
            <person name="Aotsuka S."/>
            <person name="Yoshikawa Y."/>
            <person name="Matsunawa H."/>
            <person name="Ichihara T."/>
            <person name="Shiohata N."/>
            <person name="Sano S."/>
            <person name="Moriya S."/>
            <person name="Momiyama H."/>
            <person name="Satoh N."/>
            <person name="Takami S."/>
            <person name="Terashima Y."/>
            <person name="Suzuki O."/>
            <person name="Nakagawa S."/>
            <person name="Senoh A."/>
            <person name="Mizoguchi H."/>
            <person name="Goto Y."/>
            <person name="Shimizu F."/>
            <person name="Wakebe H."/>
            <person name="Hishigaki H."/>
            <person name="Watanabe T."/>
            <person name="Sugiyama A."/>
            <person name="Takemoto M."/>
            <person name="Kawakami B."/>
            <person name="Yamazaki M."/>
            <person name="Watanabe K."/>
            <person name="Kumagai A."/>
            <person name="Itakura S."/>
            <person name="Fukuzumi Y."/>
            <person name="Fujimori Y."/>
            <person name="Komiyama M."/>
            <person name="Tashiro H."/>
            <person name="Tanigami A."/>
            <person name="Fujiwara T."/>
            <person name="Ono T."/>
            <person name="Yamada K."/>
            <person name="Fujii Y."/>
            <person name="Ozaki K."/>
            <person name="Hirao M."/>
            <person name="Ohmori Y."/>
            <person name="Kawabata A."/>
            <person name="Hikiji T."/>
            <person name="Kobatake N."/>
            <person name="Inagaki H."/>
            <person name="Ikema Y."/>
            <person name="Okamoto S."/>
            <person name="Okitani R."/>
            <person name="Kawakami T."/>
            <person name="Noguchi S."/>
            <person name="Itoh T."/>
            <person name="Shigeta K."/>
            <person name="Senba T."/>
            <person name="Matsumura K."/>
            <person name="Nakajima Y."/>
            <person name="Mizuno T."/>
            <person name="Morinaga M."/>
            <person name="Sasaki M."/>
            <person name="Togashi T."/>
            <person name="Oyama M."/>
            <person name="Hata H."/>
            <person name="Watanabe M."/>
            <person name="Komatsu T."/>
            <person name="Mizushima-Sugano J."/>
            <person name="Satoh T."/>
            <person name="Shirai Y."/>
            <person name="Takahashi Y."/>
            <person name="Nakagawa K."/>
            <person name="Okumura K."/>
            <person name="Nagase T."/>
            <person name="Nomura N."/>
            <person name="Kikuchi H."/>
            <person name="Masuho Y."/>
            <person name="Yamashita R."/>
            <person name="Nakai K."/>
            <person name="Yada T."/>
            <person name="Nakamura Y."/>
            <person name="Ohara O."/>
            <person name="Isogai T."/>
            <person name="Sugano S."/>
        </authorList>
    </citation>
    <scope>NUCLEOTIDE SEQUENCE [LARGE SCALE MRNA]</scope>
</reference>
<reference key="4">
    <citation type="submission" date="2005-09" db="EMBL/GenBank/DDBJ databases">
        <authorList>
            <person name="Mural R.J."/>
            <person name="Istrail S."/>
            <person name="Sutton G.G."/>
            <person name="Florea L."/>
            <person name="Halpern A.L."/>
            <person name="Mobarry C.M."/>
            <person name="Lippert R."/>
            <person name="Walenz B."/>
            <person name="Shatkay H."/>
            <person name="Dew I."/>
            <person name="Miller J.R."/>
            <person name="Flanigan M.J."/>
            <person name="Edwards N.J."/>
            <person name="Bolanos R."/>
            <person name="Fasulo D."/>
            <person name="Halldorsson B.V."/>
            <person name="Hannenhalli S."/>
            <person name="Turner R."/>
            <person name="Yooseph S."/>
            <person name="Lu F."/>
            <person name="Nusskern D.R."/>
            <person name="Shue B.C."/>
            <person name="Zheng X.H."/>
            <person name="Zhong F."/>
            <person name="Delcher A.L."/>
            <person name="Huson D.H."/>
            <person name="Kravitz S.A."/>
            <person name="Mouchard L."/>
            <person name="Reinert K."/>
            <person name="Remington K.A."/>
            <person name="Clark A.G."/>
            <person name="Waterman M.S."/>
            <person name="Eichler E.E."/>
            <person name="Adams M.D."/>
            <person name="Hunkapiller M.W."/>
            <person name="Myers E.W."/>
            <person name="Venter J.C."/>
        </authorList>
    </citation>
    <scope>NUCLEOTIDE SEQUENCE [LARGE SCALE GENOMIC DNA]</scope>
</reference>
<reference key="5">
    <citation type="journal article" date="2004" name="Genome Res.">
        <title>The status, quality, and expansion of the NIH full-length cDNA project: the Mammalian Gene Collection (MGC).</title>
        <authorList>
            <consortium name="The MGC Project Team"/>
        </authorList>
    </citation>
    <scope>NUCLEOTIDE SEQUENCE [LARGE SCALE MRNA]</scope>
    <source>
        <tissue>Skin</tissue>
        <tissue>Uterus</tissue>
    </source>
</reference>
<reference key="6">
    <citation type="journal article" date="2005" name="J. Biol. Chem.">
        <title>COMMD proteins, a novel family of structural and functional homologs of MURR1.</title>
        <authorList>
            <person name="Burstein E."/>
            <person name="Hoberg J.E."/>
            <person name="Wilkinson A.S."/>
            <person name="Rumble J.M."/>
            <person name="Csomos R.A."/>
            <person name="Komarck C.M."/>
            <person name="Maine G.N."/>
            <person name="Wilkinson J.C."/>
            <person name="Mayo M.W."/>
            <person name="Duckett C.S."/>
        </authorList>
    </citation>
    <scope>FUNCTION</scope>
    <scope>INTERACTION WITH COMMD1; RELA; RELB AND NFKB1</scope>
    <scope>TISSUE SPECIFICITY</scope>
</reference>
<reference key="7">
    <citation type="journal article" date="2011" name="BMC Syst. Biol.">
        <title>Initial characterization of the human central proteome.</title>
        <authorList>
            <person name="Burkard T.R."/>
            <person name="Planyavsky M."/>
            <person name="Kaupe I."/>
            <person name="Breitwieser F.P."/>
            <person name="Buerckstuemmer T."/>
            <person name="Bennett K.L."/>
            <person name="Superti-Furga G."/>
            <person name="Colinge J."/>
        </authorList>
    </citation>
    <scope>IDENTIFICATION BY MASS SPECTROMETRY [LARGE SCALE ANALYSIS]</scope>
</reference>
<reference key="8">
    <citation type="journal article" date="2011" name="J. Biol. Chem.">
        <title>COMMD1 (copper metabolism MURR1 domain-containing protein 1) regulates Cullin RING ligases by preventing CAND1 (Cullin-associated Nedd8-dissociated protein 1) binding.</title>
        <authorList>
            <person name="Mao X."/>
            <person name="Gluck N."/>
            <person name="Chen B."/>
            <person name="Starokadomskyy P."/>
            <person name="Li H."/>
            <person name="Maine G.N."/>
            <person name="Burstein E."/>
        </authorList>
    </citation>
    <scope>FUNCTION</scope>
    <scope>INTERACTION WITH CUL2; CUL3; CUL4A; CUL4B AND CUL7</scope>
    <scope>SUBCELLULAR LOCATION</scope>
</reference>
<reference key="9">
    <citation type="journal article" date="2013" name="Am. J. Physiol.">
        <title>Functional interaction of COMMD3 and COMMD9 with the epithelial sodium channel.</title>
        <authorList>
            <person name="Liu Y.F."/>
            <person name="Swart M."/>
            <person name="Ke Y."/>
            <person name="Ly K."/>
            <person name="McDonald F.J."/>
        </authorList>
    </citation>
    <scope>INTERACTION WITH SCNN1B</scope>
</reference>
<reference key="10">
    <citation type="journal article" date="2013" name="J. Clin. Invest.">
        <title>CCDC22 deficiency in humans blunts activation of proinflammatory NF-kappaB signaling.</title>
        <authorList>
            <person name="Starokadomskyy P."/>
            <person name="Gluck N."/>
            <person name="Li H."/>
            <person name="Chen B."/>
            <person name="Wallis M."/>
            <person name="Maine G.N."/>
            <person name="Mao X."/>
            <person name="Zaidi I.W."/>
            <person name="Hein M.Y."/>
            <person name="McDonald F.J."/>
            <person name="Lenzner S."/>
            <person name="Zecha A."/>
            <person name="Ropers H.H."/>
            <person name="Kuss A.W."/>
            <person name="McGaughran J."/>
            <person name="Gecz J."/>
            <person name="Burstein E."/>
        </authorList>
    </citation>
    <scope>INTERACTION WITH CCDC22</scope>
</reference>
<reference key="11">
    <citation type="journal article" date="2015" name="Mol. Biol. Cell">
        <title>COMMD1 is linked to the WASH complex and regulates endosomal trafficking of the copper transporter ATP7A.</title>
        <authorList>
            <person name="Phillips-Krawczak C.A."/>
            <person name="Singla A."/>
            <person name="Starokadomskyy P."/>
            <person name="Deng Z."/>
            <person name="Osborne D.G."/>
            <person name="Li H."/>
            <person name="Dick C.J."/>
            <person name="Gomez T.S."/>
            <person name="Koenecke M."/>
            <person name="Zhang J.S."/>
            <person name="Dai H."/>
            <person name="Sifuentes-Dominguez L.F."/>
            <person name="Geng L.N."/>
            <person name="Kaufmann S.H."/>
            <person name="Hein M.Y."/>
            <person name="Wallis M."/>
            <person name="McGaughran J."/>
            <person name="Gecz J."/>
            <person name="van de Sluis B."/>
            <person name="Billadeau D.D."/>
            <person name="Burstein E."/>
        </authorList>
    </citation>
    <scope>INTERACTION WITH CCDC93</scope>
</reference>
<reference key="12">
    <citation type="journal article" date="2015" name="Proteomics">
        <title>N-terminome analysis of the human mitochondrial proteome.</title>
        <authorList>
            <person name="Vaca Jacome A.S."/>
            <person name="Rabilloud T."/>
            <person name="Schaeffer-Reiss C."/>
            <person name="Rompais M."/>
            <person name="Ayoub D."/>
            <person name="Lane L."/>
            <person name="Bairoch A."/>
            <person name="Van Dorsselaer A."/>
            <person name="Carapito C."/>
        </authorList>
    </citation>
    <scope>ACETYLATION [LARGE SCALE ANALYSIS] AT SER-2</scope>
    <scope>CLEAVAGE OF INITIATOR METHIONINE [LARGE SCALE ANALYSIS]</scope>
    <scope>IDENTIFICATION BY MASS SPECTROMETRY [LARGE SCALE ANALYSIS]</scope>
</reference>
<reference evidence="14 15 16" key="13">
    <citation type="journal article" date="2023" name="Cell">
        <title>Structure of the endosomal commander complex linked to Ritscher-Schinzel syndrome.</title>
        <authorList>
            <person name="Healy M.D."/>
            <person name="McNally K.E."/>
            <person name="Butkovic R."/>
            <person name="Chilton M."/>
            <person name="Kato K."/>
            <person name="Sacharz J."/>
            <person name="McConville C."/>
            <person name="Moody E.R.R."/>
            <person name="Shaw S."/>
            <person name="Planelles-Herrero V.J."/>
            <person name="Yadav S.K.N."/>
            <person name="Ross J."/>
            <person name="Borucu U."/>
            <person name="Palmer C.S."/>
            <person name="Chen K.E."/>
            <person name="Croll T.I."/>
            <person name="Hall R.J."/>
            <person name="Caruana N.J."/>
            <person name="Ghai R."/>
            <person name="Nguyen T.H.D."/>
            <person name="Heesom K.J."/>
            <person name="Saitoh S."/>
            <person name="Berger I."/>
            <person name="Schaffitzel C."/>
            <person name="Williams T.A."/>
            <person name="Stroud D.A."/>
            <person name="Derivery E."/>
            <person name="Collins B.M."/>
            <person name="Cullen P.J."/>
        </authorList>
    </citation>
    <scope>STRUCTURE BY ELECTRON MICROSCOPY (3.12 ANGSTROMS) OF THE CCC COMPLEX</scope>
    <scope>FUNCTION</scope>
    <scope>SUBUNIT</scope>
</reference>
<reference evidence="17" key="14">
    <citation type="journal article" date="2024" name="Nat. Struct. Mol. Biol.">
        <title>Structure and interactions of the endogenous human commander complex.</title>
        <authorList>
            <person name="Laulumaa S."/>
            <person name="Kumpula E.P."/>
            <person name="Huiskonen J.T."/>
            <person name="Varjosalo M."/>
        </authorList>
    </citation>
    <scope>STRUCTURE BY ELECTRON MICROSCOPY (2.90 ANGSTROMS) OF THE CCC COMPLEX</scope>
    <scope>FUNCTION</scope>
    <scope>SUBUNIT</scope>
</reference>